<comment type="function">
    <text evidence="1">Dehydrogenase component of the alcohol dehydrogenase multicomponent enzyme system which is involved in the production of acetic acid and in the ethanol oxidase respiratory chain. Quinohemoprotein alcohol dehydrogenase (ADH) catalyzes the oxidation of ethanol to acetaldehyde by transferring electrons to the ubiquinone embedded in the membrane phospholipids. The electrons transfer from ethanol to membranous ubiquinone occurs from pyrroloquinoline quinone (PQQ) to one heme c in subunit I (AdhA), and finally to two heme c in subunit II (AdhB). Besides ubiquinone reduction, ADH also has a ubiquinol (QH2) oxidation reaction which mediates electron transfer from ubiquinol to the non-energy generating bypass oxidase system. The electrons transfer occurs from ubiquinol (QH2) to the additional heme c within subunit II (AdhB).</text>
</comment>
<comment type="catalytic activity">
    <reaction evidence="1">
        <text>ethanol + a ubiquinone = a ubiquinol + acetaldehyde</text>
        <dbReference type="Rhea" id="RHEA:26442"/>
        <dbReference type="Rhea" id="RHEA-COMP:9565"/>
        <dbReference type="Rhea" id="RHEA-COMP:9566"/>
        <dbReference type="ChEBI" id="CHEBI:15343"/>
        <dbReference type="ChEBI" id="CHEBI:16236"/>
        <dbReference type="ChEBI" id="CHEBI:16389"/>
        <dbReference type="ChEBI" id="CHEBI:17976"/>
        <dbReference type="EC" id="1.1.5.5"/>
    </reaction>
</comment>
<comment type="cofactor">
    <cofactor evidence="1">
        <name>pyrroloquinoline quinone</name>
        <dbReference type="ChEBI" id="CHEBI:58442"/>
    </cofactor>
    <text evidence="1">Binds 1 PQQ group per subunit.</text>
</comment>
<comment type="cofactor">
    <cofactor evidence="1">
        <name>Ca(2+)</name>
        <dbReference type="ChEBI" id="CHEBI:29108"/>
    </cofactor>
    <text evidence="3">Binds 1 Ca(2+) ion per subunit.</text>
</comment>
<comment type="cofactor">
    <cofactor evidence="1">
        <name>heme c</name>
        <dbReference type="ChEBI" id="CHEBI:61717"/>
    </cofactor>
    <text evidence="1">Binds 1 heme c group covalently per subunit.</text>
</comment>
<comment type="subunit">
    <text evidence="2">The alcohol dehydrogenase multicomponent enzyme system is composed of a dehydrogenase subunit I (AdhA) and a cytochrome c subunit II (AdhB).</text>
</comment>
<comment type="subcellular location">
    <subcellularLocation>
        <location evidence="6">Cell membrane</location>
        <topology evidence="6">Peripheral membrane protein</topology>
        <orientation evidence="6">Periplasmic side</orientation>
    </subcellularLocation>
</comment>
<comment type="similarity">
    <text evidence="6">Belongs to the bacterial PQQ dehydrogenase family.</text>
</comment>
<protein>
    <recommendedName>
        <fullName evidence="1">Alcohol dehydrogenase (quinone), dehydrogenase subunit</fullName>
        <shortName evidence="1">ADH</shortName>
        <ecNumber evidence="1">1.1.5.5</ecNumber>
    </recommendedName>
    <alternativeName>
        <fullName evidence="1">Alcohol dehydrogenase (quinone), acceptor subunit</fullName>
    </alternativeName>
    <alternativeName>
        <fullName evidence="1">Alcohol dehydrogenase (quinone), subunit I</fullName>
    </alternativeName>
    <alternativeName>
        <fullName evidence="1">Ethanol:Q2 reductase</fullName>
    </alternativeName>
    <alternativeName>
        <fullName evidence="1">G3-ADH subunit I</fullName>
    </alternativeName>
    <alternativeName>
        <fullName evidence="1">Quinohemoprotein alcohol dehydrogenase</fullName>
    </alternativeName>
    <alternativeName>
        <fullName evidence="1">Quinohemoprotein-cytochrome c complex</fullName>
    </alternativeName>
    <alternativeName>
        <fullName evidence="1">Ubiquinol oxidase</fullName>
    </alternativeName>
</protein>
<keyword id="KW-0106">Calcium</keyword>
<keyword id="KW-1003">Cell membrane</keyword>
<keyword id="KW-1015">Disulfide bond</keyword>
<keyword id="KW-0249">Electron transport</keyword>
<keyword id="KW-0349">Heme</keyword>
<keyword id="KW-0408">Iron</keyword>
<keyword id="KW-0472">Membrane</keyword>
<keyword id="KW-0479">Metal-binding</keyword>
<keyword id="KW-0560">Oxidoreductase</keyword>
<keyword id="KW-0634">PQQ</keyword>
<keyword id="KW-0679">Respiratory chain</keyword>
<keyword id="KW-0732">Signal</keyword>
<keyword id="KW-0813">Transport</keyword>
<proteinExistence type="inferred from homology"/>
<sequence length="739" mass="80945">MISAVFGKRRSLSRTLTAGTICAALISGYATMASADDGQGATGEAIIHADDHPGNWMTYGRTYSEQRYSPLDQINRSNVGNLKLAWYLDLDTNRGQEGTPLVIDGVMYATTNWSMMKAVDAATGKLLWSYDPRVPGNIADKGCCDTVNRGAAYWNGKVYFGTFDGRLIALDAKTGKLVWSVNTIPPEAELGKQRSYTVDGAPRIAKGRVIIGNGGSEFGARGFVTAFDAETGKVDWRFFTAPNPKNEPDHTASDSVLMNKAYQTWSPTGAWTRQGGGGTVWDSIVYDPVADLVYLGVGNGSPWNYKYRSEGKGDNLFLGSIVALKPETGEYVWHFQETPMDQWDFTSVQQIMTLDLPINGETRHVIVHAPKNGFFYIIDAKTGEFISGKNYVYVNWASGLDPKTGRPIYNPDALYTLTGKEWYGIPGDLGGHNFAAMAFSPKTGLVYIPAQQVPFLYTNQVGGFTPHPDSWNLGLDMNKVGIPDSPEAKQAFVKDLKGWIVAWDPQKQAEAWRVDHKGPWNGGILATGGDLLFQGLANGEFHAYDATNGSDLFHFAADSGIIAPPVTYLANGKQYVAVEVGWGGIYPFFLGGLARTSGWTVNHSRIIAFSLDGKSGPLPKQNDQGFLPVKPPAQFDSKRTDNGYFQFQTYCAACHGDNAEGAGVLPDLRWSGSIRHEDAFYNVVGRGALTAYGMDRFDGNMNPTEIEDIRQFLIKRANETYQREVDARKNADGIPEQLP</sequence>
<feature type="signal peptide" evidence="4">
    <location>
        <begin position="1"/>
        <end position="35"/>
    </location>
</feature>
<feature type="chain" id="PRO_0000025560" description="Alcohol dehydrogenase (quinone), dehydrogenase subunit">
    <location>
        <begin position="36"/>
        <end position="739"/>
    </location>
</feature>
<feature type="domain" description="Cytochrome c" evidence="5">
    <location>
        <begin position="635"/>
        <end position="739"/>
    </location>
</feature>
<feature type="active site" description="Proton acceptor" evidence="3">
    <location>
        <position position="344"/>
    </location>
</feature>
<feature type="binding site" evidence="3">
    <location>
        <position position="97"/>
    </location>
    <ligand>
        <name>pyrroloquinoline quinone</name>
        <dbReference type="ChEBI" id="CHEBI:58442"/>
    </ligand>
</feature>
<feature type="binding site" evidence="3">
    <location>
        <position position="149"/>
    </location>
    <ligand>
        <name>pyrroloquinoline quinone</name>
        <dbReference type="ChEBI" id="CHEBI:58442"/>
    </ligand>
</feature>
<feature type="binding site" evidence="3">
    <location>
        <position position="217"/>
    </location>
    <ligand>
        <name>Ca(2+)</name>
        <dbReference type="ChEBI" id="CHEBI:29108"/>
    </ligand>
</feature>
<feature type="binding site" evidence="3">
    <location>
        <position position="279"/>
    </location>
    <ligand>
        <name>pyrroloquinoline quinone</name>
        <dbReference type="ChEBI" id="CHEBI:58442"/>
    </ligand>
</feature>
<feature type="binding site" evidence="3">
    <location>
        <position position="299"/>
    </location>
    <ligand>
        <name>Ca(2+)</name>
        <dbReference type="ChEBI" id="CHEBI:29108"/>
    </ligand>
</feature>
<feature type="binding site" evidence="3">
    <location>
        <position position="344"/>
    </location>
    <ligand>
        <name>Ca(2+)</name>
        <dbReference type="ChEBI" id="CHEBI:29108"/>
    </ligand>
</feature>
<feature type="binding site" evidence="3">
    <location>
        <position position="371"/>
    </location>
    <ligand>
        <name>pyrroloquinoline quinone</name>
        <dbReference type="ChEBI" id="CHEBI:58442"/>
    </ligand>
</feature>
<feature type="binding site" evidence="3">
    <location>
        <position position="585"/>
    </location>
    <ligand>
        <name>pyrroloquinoline quinone</name>
        <dbReference type="ChEBI" id="CHEBI:58442"/>
    </ligand>
</feature>
<feature type="binding site" description="covalent" evidence="3">
    <location>
        <position position="651"/>
    </location>
    <ligand>
        <name>heme c</name>
        <dbReference type="ChEBI" id="CHEBI:61717"/>
    </ligand>
</feature>
<feature type="binding site" description="covalent" evidence="3">
    <location>
        <position position="654"/>
    </location>
    <ligand>
        <name>heme c</name>
        <dbReference type="ChEBI" id="CHEBI:61717"/>
    </ligand>
</feature>
<feature type="binding site" description="axial binding residue" evidence="3">
    <location>
        <position position="655"/>
    </location>
    <ligand>
        <name>heme c</name>
        <dbReference type="ChEBI" id="CHEBI:61717"/>
    </ligand>
    <ligandPart>
        <name>Fe</name>
        <dbReference type="ChEBI" id="CHEBI:18248"/>
    </ligandPart>
</feature>
<feature type="binding site" description="axial binding residue" evidence="3">
    <location>
        <position position="694"/>
    </location>
    <ligand>
        <name>heme c</name>
        <dbReference type="ChEBI" id="CHEBI:61717"/>
    </ligand>
    <ligandPart>
        <name>Fe</name>
        <dbReference type="ChEBI" id="CHEBI:18248"/>
    </ligandPart>
</feature>
<feature type="disulfide bond" evidence="3">
    <location>
        <begin position="143"/>
        <end position="144"/>
    </location>
</feature>
<dbReference type="EC" id="1.1.5.5" evidence="1"/>
<dbReference type="EMBL" id="X82894">
    <property type="protein sequence ID" value="CAA58066.1"/>
    <property type="molecule type" value="Genomic_DNA"/>
</dbReference>
<dbReference type="EMBL" id="Y09480">
    <property type="protein sequence ID" value="CAA70688.1"/>
    <property type="molecule type" value="Genomic_DNA"/>
</dbReference>
<dbReference type="SMR" id="Q44002"/>
<dbReference type="STRING" id="33995.KOEU_13900"/>
<dbReference type="BRENDA" id="1.1.5.5">
    <property type="organism ID" value="40"/>
</dbReference>
<dbReference type="GO" id="GO:0030288">
    <property type="term" value="C:outer membrane-bounded periplasmic space"/>
    <property type="evidence" value="ECO:0007669"/>
    <property type="project" value="InterPro"/>
</dbReference>
<dbReference type="GO" id="GO:0005886">
    <property type="term" value="C:plasma membrane"/>
    <property type="evidence" value="ECO:0007669"/>
    <property type="project" value="UniProtKB-SubCell"/>
</dbReference>
<dbReference type="GO" id="GO:0005509">
    <property type="term" value="F:calcium ion binding"/>
    <property type="evidence" value="ECO:0007669"/>
    <property type="project" value="InterPro"/>
</dbReference>
<dbReference type="GO" id="GO:0009055">
    <property type="term" value="F:electron transfer activity"/>
    <property type="evidence" value="ECO:0007669"/>
    <property type="project" value="InterPro"/>
</dbReference>
<dbReference type="GO" id="GO:0020037">
    <property type="term" value="F:heme binding"/>
    <property type="evidence" value="ECO:0007669"/>
    <property type="project" value="InterPro"/>
</dbReference>
<dbReference type="GO" id="GO:0016614">
    <property type="term" value="F:oxidoreductase activity, acting on CH-OH group of donors"/>
    <property type="evidence" value="ECO:0007669"/>
    <property type="project" value="InterPro"/>
</dbReference>
<dbReference type="CDD" id="cd10279">
    <property type="entry name" value="PQQ_ADH_II"/>
    <property type="match status" value="1"/>
</dbReference>
<dbReference type="Gene3D" id="1.10.760.10">
    <property type="entry name" value="Cytochrome c-like domain"/>
    <property type="match status" value="1"/>
</dbReference>
<dbReference type="Gene3D" id="2.140.10.10">
    <property type="entry name" value="Quinoprotein alcohol dehydrogenase-like superfamily"/>
    <property type="match status" value="1"/>
</dbReference>
<dbReference type="InterPro" id="IPR009056">
    <property type="entry name" value="Cyt_c-like_dom"/>
</dbReference>
<dbReference type="InterPro" id="IPR036909">
    <property type="entry name" value="Cyt_c-like_dom_sf"/>
</dbReference>
<dbReference type="InterPro" id="IPR018391">
    <property type="entry name" value="PQQ_b-propeller_rpt"/>
</dbReference>
<dbReference type="InterPro" id="IPR017512">
    <property type="entry name" value="PQQ_MeOH/EtOH_DH"/>
</dbReference>
<dbReference type="InterPro" id="IPR002372">
    <property type="entry name" value="PQQ_rpt_dom"/>
</dbReference>
<dbReference type="InterPro" id="IPR011047">
    <property type="entry name" value="Quinoprotein_ADH-like_sf"/>
</dbReference>
<dbReference type="InterPro" id="IPR001479">
    <property type="entry name" value="Quinoprotein_DH_CS"/>
</dbReference>
<dbReference type="NCBIfam" id="TIGR03075">
    <property type="entry name" value="PQQ_enz_alc_DH"/>
    <property type="match status" value="1"/>
</dbReference>
<dbReference type="PANTHER" id="PTHR32303">
    <property type="entry name" value="QUINOPROTEIN ALCOHOL DEHYDROGENASE (CYTOCHROME C)"/>
    <property type="match status" value="1"/>
</dbReference>
<dbReference type="Pfam" id="PF13442">
    <property type="entry name" value="Cytochrome_CBB3"/>
    <property type="match status" value="1"/>
</dbReference>
<dbReference type="Pfam" id="PF01011">
    <property type="entry name" value="PQQ"/>
    <property type="match status" value="1"/>
</dbReference>
<dbReference type="Pfam" id="PF13360">
    <property type="entry name" value="PQQ_2"/>
    <property type="match status" value="1"/>
</dbReference>
<dbReference type="SMART" id="SM00564">
    <property type="entry name" value="PQQ"/>
    <property type="match status" value="5"/>
</dbReference>
<dbReference type="SUPFAM" id="SSF46626">
    <property type="entry name" value="Cytochrome c"/>
    <property type="match status" value="1"/>
</dbReference>
<dbReference type="SUPFAM" id="SSF50998">
    <property type="entry name" value="Quinoprotein alcohol dehydrogenase-like"/>
    <property type="match status" value="1"/>
</dbReference>
<dbReference type="PROSITE" id="PS00363">
    <property type="entry name" value="BACTERIAL_PQQ_1"/>
    <property type="match status" value="1"/>
</dbReference>
<dbReference type="PROSITE" id="PS00364">
    <property type="entry name" value="BACTERIAL_PQQ_2"/>
    <property type="match status" value="1"/>
</dbReference>
<dbReference type="PROSITE" id="PS51007">
    <property type="entry name" value="CYTC"/>
    <property type="match status" value="1"/>
</dbReference>
<name>ADHA_KOMEU</name>
<accession>Q44002</accession>
<accession>O07952</accession>
<reference key="1">
    <citation type="submission" date="1996-11" db="EMBL/GenBank/DDBJ databases">
        <authorList>
            <person name="Thurner C.A.K."/>
        </authorList>
    </citation>
    <scope>NUCLEOTIDE SEQUENCE [GENOMIC DNA]</scope>
    <source>
        <strain>ATCC 51845 / DSM 6160 / JCM 16395 / LMG 18890 / DES 11</strain>
    </source>
</reference>
<gene>
    <name evidence="1" type="primary">adhA</name>
    <name type="synonym">adh</name>
</gene>
<organism>
    <name type="scientific">Komagataeibacter europaeus</name>
    <name type="common">Gluconacetobacter europaeus</name>
    <dbReference type="NCBI Taxonomy" id="33995"/>
    <lineage>
        <taxon>Bacteria</taxon>
        <taxon>Pseudomonadati</taxon>
        <taxon>Pseudomonadota</taxon>
        <taxon>Alphaproteobacteria</taxon>
        <taxon>Acetobacterales</taxon>
        <taxon>Acetobacteraceae</taxon>
        <taxon>Komagataeibacter</taxon>
    </lineage>
</organism>
<evidence type="ECO:0000250" key="1">
    <source>
        <dbReference type="UniProtKB" id="O05542"/>
    </source>
</evidence>
<evidence type="ECO:0000250" key="2">
    <source>
        <dbReference type="UniProtKB" id="P28036"/>
    </source>
</evidence>
<evidence type="ECO:0000250" key="3">
    <source>
        <dbReference type="UniProtKB" id="Q8GR64"/>
    </source>
</evidence>
<evidence type="ECO:0000255" key="4"/>
<evidence type="ECO:0000255" key="5">
    <source>
        <dbReference type="PROSITE-ProRule" id="PRU00433"/>
    </source>
</evidence>
<evidence type="ECO:0000305" key="6"/>